<dbReference type="EMBL" id="BX571857">
    <property type="protein sequence ID" value="CAG43877.1"/>
    <property type="status" value="ALT_INIT"/>
    <property type="molecule type" value="Genomic_DNA"/>
</dbReference>
<dbReference type="RefSeq" id="WP_001793373.1">
    <property type="nucleotide sequence ID" value="NC_002953.3"/>
</dbReference>
<dbReference type="KEGG" id="sas:SAS2069"/>
<dbReference type="HOGENOM" id="CLU_151983_0_0_9"/>
<dbReference type="GO" id="GO:0005886">
    <property type="term" value="C:plasma membrane"/>
    <property type="evidence" value="ECO:0007669"/>
    <property type="project" value="UniProtKB-SubCell"/>
</dbReference>
<dbReference type="InterPro" id="IPR031396">
    <property type="entry name" value="SepA"/>
</dbReference>
<dbReference type="Pfam" id="PF17080">
    <property type="entry name" value="SepA"/>
    <property type="match status" value="1"/>
</dbReference>
<feature type="chain" id="PRO_0000351486" description="Multidrug resistance efflux pump SepA">
    <location>
        <begin position="1"/>
        <end position="155"/>
    </location>
</feature>
<feature type="transmembrane region" description="Helical" evidence="2">
    <location>
        <begin position="18"/>
        <end position="38"/>
    </location>
</feature>
<feature type="transmembrane region" description="Helical" evidence="2">
    <location>
        <begin position="63"/>
        <end position="83"/>
    </location>
</feature>
<feature type="transmembrane region" description="Helical" evidence="2">
    <location>
        <begin position="100"/>
        <end position="120"/>
    </location>
</feature>
<feature type="transmembrane region" description="Helical" evidence="2">
    <location>
        <begin position="122"/>
        <end position="142"/>
    </location>
</feature>
<name>MDEP_STAAS</name>
<sequence length="157" mass="18885">MIVNYLKHKFYNLLTTMVVLFIFVLSGAIFLTFLGFGLYGLSRILIYFRLGDFTYNRSMYDNLLYYGSYIIFGYFIIFAVEHLMDYFRKMLPENAYFRGATFHLISYTVATTLFYFIIHLNYVYINIDFWVIMVIIGFLYVCKLQFYPESKNLNNRK</sequence>
<evidence type="ECO:0000250" key="1"/>
<evidence type="ECO:0000255" key="2"/>
<evidence type="ECO:0000305" key="3"/>
<keyword id="KW-1003">Cell membrane</keyword>
<keyword id="KW-0472">Membrane</keyword>
<keyword id="KW-0812">Transmembrane</keyword>
<keyword id="KW-1133">Transmembrane helix</keyword>
<keyword id="KW-0813">Transport</keyword>
<comment type="function">
    <text evidence="1">Involved in multidrug efflux.</text>
</comment>
<comment type="subcellular location">
    <subcellularLocation>
        <location evidence="3">Cell membrane</location>
        <topology evidence="3">Multi-pass membrane protein</topology>
    </subcellularLocation>
</comment>
<comment type="similarity">
    <text evidence="3">Belongs to the multidrug resistance efflux pump SepA family.</text>
</comment>
<comment type="sequence caution" evidence="3">
    <conflict type="erroneous initiation">
        <sequence resource="EMBL-CDS" id="CAG43877"/>
    </conflict>
</comment>
<protein>
    <recommendedName>
        <fullName>Multidrug resistance efflux pump SepA</fullName>
    </recommendedName>
    <alternativeName>
        <fullName>Antiseptic resistance protein SepA</fullName>
    </alternativeName>
    <alternativeName>
        <fullName>Staphylococcal efflux pump A</fullName>
    </alternativeName>
</protein>
<accession>Q6G7E6</accession>
<gene>
    <name type="primary">sepA</name>
    <name type="ordered locus">SAS2069</name>
</gene>
<reference key="1">
    <citation type="journal article" date="2004" name="Proc. Natl. Acad. Sci. U.S.A.">
        <title>Complete genomes of two clinical Staphylococcus aureus strains: evidence for the rapid evolution of virulence and drug resistance.</title>
        <authorList>
            <person name="Holden M.T.G."/>
            <person name="Feil E.J."/>
            <person name="Lindsay J.A."/>
            <person name="Peacock S.J."/>
            <person name="Day N.P.J."/>
            <person name="Enright M.C."/>
            <person name="Foster T.J."/>
            <person name="Moore C.E."/>
            <person name="Hurst L."/>
            <person name="Atkin R."/>
            <person name="Barron A."/>
            <person name="Bason N."/>
            <person name="Bentley S.D."/>
            <person name="Chillingworth C."/>
            <person name="Chillingworth T."/>
            <person name="Churcher C."/>
            <person name="Clark L."/>
            <person name="Corton C."/>
            <person name="Cronin A."/>
            <person name="Doggett J."/>
            <person name="Dowd L."/>
            <person name="Feltwell T."/>
            <person name="Hance Z."/>
            <person name="Harris B."/>
            <person name="Hauser H."/>
            <person name="Holroyd S."/>
            <person name="Jagels K."/>
            <person name="James K.D."/>
            <person name="Lennard N."/>
            <person name="Line A."/>
            <person name="Mayes R."/>
            <person name="Moule S."/>
            <person name="Mungall K."/>
            <person name="Ormond D."/>
            <person name="Quail M.A."/>
            <person name="Rabbinowitsch E."/>
            <person name="Rutherford K.M."/>
            <person name="Sanders M."/>
            <person name="Sharp S."/>
            <person name="Simmonds M."/>
            <person name="Stevens K."/>
            <person name="Whitehead S."/>
            <person name="Barrell B.G."/>
            <person name="Spratt B.G."/>
            <person name="Parkhill J."/>
        </authorList>
    </citation>
    <scope>NUCLEOTIDE SEQUENCE [LARGE SCALE GENOMIC DNA]</scope>
    <source>
        <strain>MSSA476</strain>
    </source>
</reference>
<proteinExistence type="inferred from homology"/>
<organism>
    <name type="scientific">Staphylococcus aureus (strain MSSA476)</name>
    <dbReference type="NCBI Taxonomy" id="282459"/>
    <lineage>
        <taxon>Bacteria</taxon>
        <taxon>Bacillati</taxon>
        <taxon>Bacillota</taxon>
        <taxon>Bacilli</taxon>
        <taxon>Bacillales</taxon>
        <taxon>Staphylococcaceae</taxon>
        <taxon>Staphylococcus</taxon>
    </lineage>
</organism>